<organism>
    <name type="scientific">Streptomyces sp</name>
    <dbReference type="NCBI Taxonomy" id="1931"/>
    <lineage>
        <taxon>Bacteria</taxon>
        <taxon>Bacillati</taxon>
        <taxon>Actinomycetota</taxon>
        <taxon>Actinomycetes</taxon>
        <taxon>Kitasatosporales</taxon>
        <taxon>Streptomycetaceae</taxon>
        <taxon>Streptomyces</taxon>
    </lineage>
</organism>
<name>THTA2_STRSQ</name>
<evidence type="ECO:0000250" key="1">
    <source>
        <dbReference type="UniProtKB" id="P0A825"/>
    </source>
</evidence>
<evidence type="ECO:0000269" key="2">
    <source>
    </source>
</evidence>
<evidence type="ECO:0000269" key="3">
    <source>
    </source>
</evidence>
<evidence type="ECO:0000303" key="4">
    <source>
    </source>
</evidence>
<evidence type="ECO:0000303" key="5">
    <source ref="1"/>
</evidence>
<evidence type="ECO:0000305" key="6"/>
<evidence type="ECO:0000305" key="7">
    <source>
    </source>
</evidence>
<dbReference type="EC" id="2.2.1.-" evidence="2"/>
<dbReference type="EMBL" id="AB538860">
    <property type="protein sequence ID" value="BAJ19052.1"/>
    <property type="molecule type" value="Genomic_DNA"/>
</dbReference>
<dbReference type="SMR" id="E1CG38"/>
<dbReference type="GO" id="GO:0005737">
    <property type="term" value="C:cytoplasm"/>
    <property type="evidence" value="ECO:0007669"/>
    <property type="project" value="TreeGrafter"/>
</dbReference>
<dbReference type="GO" id="GO:0004372">
    <property type="term" value="F:glycine hydroxymethyltransferase activity"/>
    <property type="evidence" value="ECO:0007669"/>
    <property type="project" value="TreeGrafter"/>
</dbReference>
<dbReference type="GO" id="GO:0030170">
    <property type="term" value="F:pyridoxal phosphate binding"/>
    <property type="evidence" value="ECO:0007669"/>
    <property type="project" value="TreeGrafter"/>
</dbReference>
<dbReference type="GO" id="GO:0017000">
    <property type="term" value="P:antibiotic biosynthetic process"/>
    <property type="evidence" value="ECO:0007669"/>
    <property type="project" value="UniProtKB-KW"/>
</dbReference>
<dbReference type="GO" id="GO:0019264">
    <property type="term" value="P:glycine biosynthetic process from serine"/>
    <property type="evidence" value="ECO:0007669"/>
    <property type="project" value="TreeGrafter"/>
</dbReference>
<dbReference type="GO" id="GO:0046653">
    <property type="term" value="P:tetrahydrofolate metabolic process"/>
    <property type="evidence" value="ECO:0007669"/>
    <property type="project" value="TreeGrafter"/>
</dbReference>
<dbReference type="Gene3D" id="3.90.1150.10">
    <property type="entry name" value="Aspartate Aminotransferase, domain 1"/>
    <property type="match status" value="1"/>
</dbReference>
<dbReference type="Gene3D" id="3.40.640.10">
    <property type="entry name" value="Type I PLP-dependent aspartate aminotransferase-like (Major domain)"/>
    <property type="match status" value="1"/>
</dbReference>
<dbReference type="InterPro" id="IPR015424">
    <property type="entry name" value="PyrdxlP-dep_Trfase"/>
</dbReference>
<dbReference type="InterPro" id="IPR015421">
    <property type="entry name" value="PyrdxlP-dep_Trfase_major"/>
</dbReference>
<dbReference type="InterPro" id="IPR015422">
    <property type="entry name" value="PyrdxlP-dep_Trfase_small"/>
</dbReference>
<dbReference type="InterPro" id="IPR049943">
    <property type="entry name" value="Ser_HO-MeTrfase-like"/>
</dbReference>
<dbReference type="InterPro" id="IPR039429">
    <property type="entry name" value="SHMT-like_dom"/>
</dbReference>
<dbReference type="PANTHER" id="PTHR11680">
    <property type="entry name" value="SERINE HYDROXYMETHYLTRANSFERASE"/>
    <property type="match status" value="1"/>
</dbReference>
<dbReference type="PANTHER" id="PTHR11680:SF35">
    <property type="entry name" value="SERINE HYDROXYMETHYLTRANSFERASE 1"/>
    <property type="match status" value="1"/>
</dbReference>
<dbReference type="Pfam" id="PF00464">
    <property type="entry name" value="SHMT"/>
    <property type="match status" value="1"/>
</dbReference>
<dbReference type="SUPFAM" id="SSF53383">
    <property type="entry name" value="PLP-dependent transferases"/>
    <property type="match status" value="1"/>
</dbReference>
<gene>
    <name evidence="5" type="primary">capH</name>
</gene>
<comment type="function">
    <text evidence="2 3">Transaldolase involved in the biosynthesis of the capuramycin-type nucleoside antibiotic A-503083 (PubMed:25855790). Catalyzes the condensation of L-threonine and uridine-5'-aldehyde to form 5'-C-glycyluridine (GlyU) (PubMed:25855790, PubMed:29343643). Forms (5'S,6'S)-GlyU (PubMed:29343643).</text>
</comment>
<comment type="catalytic activity">
    <reaction evidence="3 7">
        <text>uridine-5'-aldehyde + L-threonine = (5'S,6'S)-C-glycyluridine + acetaldehyde</text>
        <dbReference type="Rhea" id="RHEA:77183"/>
        <dbReference type="ChEBI" id="CHEBI:15343"/>
        <dbReference type="ChEBI" id="CHEBI:57926"/>
        <dbReference type="ChEBI" id="CHEBI:86258"/>
        <dbReference type="ChEBI" id="CHEBI:229461"/>
    </reaction>
    <physiologicalReaction direction="left-to-right" evidence="3 7">
        <dbReference type="Rhea" id="RHEA:77184"/>
    </physiologicalReaction>
</comment>
<comment type="cofactor">
    <cofactor evidence="2">
        <name>pyridoxal 5'-phosphate</name>
        <dbReference type="ChEBI" id="CHEBI:597326"/>
    </cofactor>
</comment>
<comment type="biophysicochemical properties">
    <kinetics>
        <KM evidence="2">19 mM for uridine-5'-aldehyde</KM>
        <KM evidence="2">31 uM for L-threonine</KM>
        <text evidence="2">kcat is 44 min(-1) with uridine-5'-aldehyde as substrate. kcat is 45 min(-1) with L-threonine as substrate.</text>
    </kinetics>
</comment>
<comment type="pathway">
    <text evidence="7">Antibiotic biosynthesis.</text>
</comment>
<comment type="similarity">
    <text evidence="6">Belongs to the SHMT family.</text>
</comment>
<sequence length="412" mass="45393">MTDIRELRKVVDRFRAQERKAAASINLVPSENKLSPLAQMPLSTDYYNRYFFNDELDPGFWQFRGGQEVAKIQTELARGHLSRLARAPYVNERPISGLSAMMMAMAGLGGPPGGTVVSIDAASGGHYATADMARRLGFESATVPVVRGRVDEQWFGQVLREHVPELVYLDLQNSRHELEVSRVAELIEAHSPHTILHVDCSHTMGLILGGALSNPLDAGAHTMGGSTHKSFPGPHKGVLFTRSPELHQRLKHAQFTMLSSHHFAETLALGLAAAEFRHFGHAYAEQVVANARLLGKLLAADGFDVTADENGHATSTHQLWVRIGDAEQTDRFSKYLYDHGIRVNVQVDLPGLPGPVLRLGVNELTFLGGHEAAVHALAEEFSHARDGVRRDGEGSQRVREQYGPPFYFVEFS</sequence>
<protein>
    <recommendedName>
        <fullName evidence="6">L-threonine:uridine-5'-aldehyde transaldolase</fullName>
        <shortName evidence="4">L-Thr:UA transaldolase</shortName>
        <shortName evidence="4">L-Thr:uridine-5'-aldehyde transaldolase</shortName>
        <ecNumber evidence="2">2.2.1.-</ecNumber>
    </recommendedName>
</protein>
<keyword id="KW-0045">Antibiotic biosynthesis</keyword>
<keyword id="KW-0663">Pyridoxal phosphate</keyword>
<keyword id="KW-0808">Transferase</keyword>
<proteinExistence type="evidence at protein level"/>
<reference key="1">
    <citation type="submission" date="2009-12" db="EMBL/GenBank/DDBJ databases">
        <title>An ATP-independent strategy for carboxylic acid activation and amide bond formation revealed upon characterization of the A-503083 biosynthetic gene cluster.</title>
        <authorList>
            <person name="Funabashi M."/>
            <person name="Nonaka K."/>
            <person name="Hosobuchi M."/>
            <person name="Fujita Y."/>
            <person name="Shibata T."/>
            <person name="Chi X."/>
            <person name="Yang Z."/>
            <person name="Van Lanen S.G."/>
        </authorList>
    </citation>
    <scope>NUCLEOTIDE SEQUENCE [GENOMIC DNA]</scope>
    <source>
        <strain>SANK 62799</strain>
    </source>
</reference>
<reference key="2">
    <citation type="journal article" date="2015" name="J. Biol. Chem.">
        <title>The biosynthesis of capuramycin-type antibiotics: identification of the A-102395 biosynthetic gene cluster, mechanism of self-resistance, and formation of uridine-5'-carboxamide.</title>
        <authorList>
            <person name="Cai W."/>
            <person name="Goswami A."/>
            <person name="Yang Z."/>
            <person name="Liu X."/>
            <person name="Green K.D."/>
            <person name="Barnard-Britson S."/>
            <person name="Baba S."/>
            <person name="Funabashi M."/>
            <person name="Nonaka K."/>
            <person name="Sunkara M."/>
            <person name="Morris A.J."/>
            <person name="Spork A.P."/>
            <person name="Ducho C."/>
            <person name="Garneau-Tsodikova S."/>
            <person name="Thorson J.S."/>
            <person name="Van Lanen S.G."/>
        </authorList>
    </citation>
    <scope>FUNCTION</scope>
    <scope>CATALYTIC ACTIVITY</scope>
    <scope>COFACTOR</scope>
    <scope>BIOPHYSICOCHEMICAL PROPERTIES</scope>
    <source>
        <strain>SANK 62799</strain>
    </source>
</reference>
<reference key="3">
    <citation type="journal article" date="2018" name="Proc. Natl. Acad. Sci. U.S.A.">
        <title>Pyridoxal-5'-phosphate as an oxygenase cofactor: Discovery of a carboxamide-forming, alpha-amino acid monooxygenase-decarboxylase.</title>
        <authorList>
            <person name="Huang Y."/>
            <person name="Liu X."/>
            <person name="Cui Z."/>
            <person name="Wiegmann D."/>
            <person name="Niro G."/>
            <person name="Ducho C."/>
            <person name="Song Y."/>
            <person name="Yang Z."/>
            <person name="Van Lanen S.G."/>
        </authorList>
    </citation>
    <scope>FUNCTION</scope>
    <scope>CATALYTIC ACTIVITY</scope>
    <source>
        <strain>SANK 62799</strain>
    </source>
</reference>
<feature type="chain" id="PRO_0000459784" description="L-threonine:uridine-5'-aldehyde transaldolase">
    <location>
        <begin position="1"/>
        <end position="412"/>
    </location>
</feature>
<feature type="modified residue" description="N6-(pyridoxal phosphate)lysine" evidence="1">
    <location>
        <position position="229"/>
    </location>
</feature>
<accession>E1CG38</accession>